<evidence type="ECO:0000255" key="1">
    <source>
        <dbReference type="HAMAP-Rule" id="MF_00163"/>
    </source>
</evidence>
<proteinExistence type="inferred from homology"/>
<organism>
    <name type="scientific">Agrobacterium fabrum (strain C58 / ATCC 33970)</name>
    <name type="common">Agrobacterium tumefaciens (strain C58)</name>
    <dbReference type="NCBI Taxonomy" id="176299"/>
    <lineage>
        <taxon>Bacteria</taxon>
        <taxon>Pseudomonadati</taxon>
        <taxon>Pseudomonadota</taxon>
        <taxon>Alphaproteobacteria</taxon>
        <taxon>Hyphomicrobiales</taxon>
        <taxon>Rhizobiaceae</taxon>
        <taxon>Rhizobium/Agrobacterium group</taxon>
        <taxon>Agrobacterium</taxon>
        <taxon>Agrobacterium tumefaciens complex</taxon>
    </lineage>
</organism>
<sequence length="170" mass="19026">MTIKPLIILPDPVLRQQSKLIEQVDAEVLRLADDMLETMYDAPGIGLAAIQIGVPRRMLVIDVAREGEEKTPVVFINPEILKVSDDISTYEEGCLSIPDYYAEVERPASLTVQYVGRDGKQQTVEADGLLATCLQHEIDHLNGVLFIDHISRLKRDMVIKKFTKAARAKI</sequence>
<feature type="chain" id="PRO_0000082729" description="Peptide deformylase">
    <location>
        <begin position="1"/>
        <end position="170"/>
    </location>
</feature>
<feature type="active site" evidence="1">
    <location>
        <position position="137"/>
    </location>
</feature>
<feature type="binding site" evidence="1">
    <location>
        <position position="94"/>
    </location>
    <ligand>
        <name>Fe cation</name>
        <dbReference type="ChEBI" id="CHEBI:24875"/>
    </ligand>
</feature>
<feature type="binding site" evidence="1">
    <location>
        <position position="136"/>
    </location>
    <ligand>
        <name>Fe cation</name>
        <dbReference type="ChEBI" id="CHEBI:24875"/>
    </ligand>
</feature>
<feature type="binding site" evidence="1">
    <location>
        <position position="140"/>
    </location>
    <ligand>
        <name>Fe cation</name>
        <dbReference type="ChEBI" id="CHEBI:24875"/>
    </ligand>
</feature>
<accession>Q8UID1</accession>
<dbReference type="EC" id="3.5.1.88" evidence="1"/>
<dbReference type="EMBL" id="AE007869">
    <property type="protein sequence ID" value="AAK86183.1"/>
    <property type="molecule type" value="Genomic_DNA"/>
</dbReference>
<dbReference type="PIR" id="AF2621">
    <property type="entry name" value="AF2621"/>
</dbReference>
<dbReference type="PIR" id="F97403">
    <property type="entry name" value="F97403"/>
</dbReference>
<dbReference type="RefSeq" id="NP_353398.1">
    <property type="nucleotide sequence ID" value="NC_003062.2"/>
</dbReference>
<dbReference type="RefSeq" id="WP_006310211.1">
    <property type="nucleotide sequence ID" value="NC_003062.2"/>
</dbReference>
<dbReference type="SMR" id="Q8UID1"/>
<dbReference type="STRING" id="176299.Atu0366"/>
<dbReference type="EnsemblBacteria" id="AAK86183">
    <property type="protein sequence ID" value="AAK86183"/>
    <property type="gene ID" value="Atu0366"/>
</dbReference>
<dbReference type="GeneID" id="1132404"/>
<dbReference type="KEGG" id="atu:Atu0366"/>
<dbReference type="PATRIC" id="fig|176299.10.peg.357"/>
<dbReference type="eggNOG" id="COG0242">
    <property type="taxonomic scope" value="Bacteria"/>
</dbReference>
<dbReference type="HOGENOM" id="CLU_061901_2_0_5"/>
<dbReference type="OrthoDB" id="9804313at2"/>
<dbReference type="PhylomeDB" id="Q8UID1"/>
<dbReference type="BioCyc" id="AGRO:ATU0366-MONOMER"/>
<dbReference type="Proteomes" id="UP000000813">
    <property type="component" value="Chromosome circular"/>
</dbReference>
<dbReference type="GO" id="GO:0046872">
    <property type="term" value="F:metal ion binding"/>
    <property type="evidence" value="ECO:0007669"/>
    <property type="project" value="UniProtKB-KW"/>
</dbReference>
<dbReference type="GO" id="GO:0042586">
    <property type="term" value="F:peptide deformylase activity"/>
    <property type="evidence" value="ECO:0007669"/>
    <property type="project" value="UniProtKB-UniRule"/>
</dbReference>
<dbReference type="GO" id="GO:0043686">
    <property type="term" value="P:co-translational protein modification"/>
    <property type="evidence" value="ECO:0007669"/>
    <property type="project" value="TreeGrafter"/>
</dbReference>
<dbReference type="GO" id="GO:0006412">
    <property type="term" value="P:translation"/>
    <property type="evidence" value="ECO:0007669"/>
    <property type="project" value="UniProtKB-UniRule"/>
</dbReference>
<dbReference type="CDD" id="cd00487">
    <property type="entry name" value="Pep_deformylase"/>
    <property type="match status" value="1"/>
</dbReference>
<dbReference type="FunFam" id="3.90.45.10:FF:000005">
    <property type="entry name" value="Peptide deformylase"/>
    <property type="match status" value="1"/>
</dbReference>
<dbReference type="Gene3D" id="3.90.45.10">
    <property type="entry name" value="Peptide deformylase"/>
    <property type="match status" value="1"/>
</dbReference>
<dbReference type="HAMAP" id="MF_00163">
    <property type="entry name" value="Pep_deformylase"/>
    <property type="match status" value="1"/>
</dbReference>
<dbReference type="InterPro" id="IPR023635">
    <property type="entry name" value="Peptide_deformylase"/>
</dbReference>
<dbReference type="InterPro" id="IPR036821">
    <property type="entry name" value="Peptide_deformylase_sf"/>
</dbReference>
<dbReference type="NCBIfam" id="TIGR00079">
    <property type="entry name" value="pept_deformyl"/>
    <property type="match status" value="1"/>
</dbReference>
<dbReference type="NCBIfam" id="NF001159">
    <property type="entry name" value="PRK00150.1-3"/>
    <property type="match status" value="1"/>
</dbReference>
<dbReference type="PANTHER" id="PTHR10458">
    <property type="entry name" value="PEPTIDE DEFORMYLASE"/>
    <property type="match status" value="1"/>
</dbReference>
<dbReference type="PANTHER" id="PTHR10458:SF22">
    <property type="entry name" value="PEPTIDE DEFORMYLASE"/>
    <property type="match status" value="1"/>
</dbReference>
<dbReference type="Pfam" id="PF01327">
    <property type="entry name" value="Pep_deformylase"/>
    <property type="match status" value="1"/>
</dbReference>
<dbReference type="PIRSF" id="PIRSF004749">
    <property type="entry name" value="Pep_def"/>
    <property type="match status" value="1"/>
</dbReference>
<dbReference type="PRINTS" id="PR01576">
    <property type="entry name" value="PDEFORMYLASE"/>
</dbReference>
<dbReference type="SUPFAM" id="SSF56420">
    <property type="entry name" value="Peptide deformylase"/>
    <property type="match status" value="1"/>
</dbReference>
<name>DEF_AGRFC</name>
<protein>
    <recommendedName>
        <fullName evidence="1">Peptide deformylase</fullName>
        <shortName evidence="1">PDF</shortName>
        <ecNumber evidence="1">3.5.1.88</ecNumber>
    </recommendedName>
    <alternativeName>
        <fullName evidence="1">Polypeptide deformylase</fullName>
    </alternativeName>
</protein>
<comment type="function">
    <text evidence="1">Removes the formyl group from the N-terminal Met of newly synthesized proteins. Requires at least a dipeptide for an efficient rate of reaction. N-terminal L-methionine is a prerequisite for activity but the enzyme has broad specificity at other positions.</text>
</comment>
<comment type="catalytic activity">
    <reaction evidence="1">
        <text>N-terminal N-formyl-L-methionyl-[peptide] + H2O = N-terminal L-methionyl-[peptide] + formate</text>
        <dbReference type="Rhea" id="RHEA:24420"/>
        <dbReference type="Rhea" id="RHEA-COMP:10639"/>
        <dbReference type="Rhea" id="RHEA-COMP:10640"/>
        <dbReference type="ChEBI" id="CHEBI:15377"/>
        <dbReference type="ChEBI" id="CHEBI:15740"/>
        <dbReference type="ChEBI" id="CHEBI:49298"/>
        <dbReference type="ChEBI" id="CHEBI:64731"/>
        <dbReference type="EC" id="3.5.1.88"/>
    </reaction>
</comment>
<comment type="cofactor">
    <cofactor evidence="1">
        <name>Fe(2+)</name>
        <dbReference type="ChEBI" id="CHEBI:29033"/>
    </cofactor>
    <text evidence="1">Binds 1 Fe(2+) ion.</text>
</comment>
<comment type="similarity">
    <text evidence="1">Belongs to the polypeptide deformylase family.</text>
</comment>
<gene>
    <name evidence="1" type="primary">def</name>
    <name type="ordered locus">Atu0366</name>
    <name type="ORF">AGR_C_640</name>
</gene>
<reference key="1">
    <citation type="journal article" date="2001" name="Science">
        <title>The genome of the natural genetic engineer Agrobacterium tumefaciens C58.</title>
        <authorList>
            <person name="Wood D.W."/>
            <person name="Setubal J.C."/>
            <person name="Kaul R."/>
            <person name="Monks D.E."/>
            <person name="Kitajima J.P."/>
            <person name="Okura V.K."/>
            <person name="Zhou Y."/>
            <person name="Chen L."/>
            <person name="Wood G.E."/>
            <person name="Almeida N.F. Jr."/>
            <person name="Woo L."/>
            <person name="Chen Y."/>
            <person name="Paulsen I.T."/>
            <person name="Eisen J.A."/>
            <person name="Karp P.D."/>
            <person name="Bovee D. Sr."/>
            <person name="Chapman P."/>
            <person name="Clendenning J."/>
            <person name="Deatherage G."/>
            <person name="Gillet W."/>
            <person name="Grant C."/>
            <person name="Kutyavin T."/>
            <person name="Levy R."/>
            <person name="Li M.-J."/>
            <person name="McClelland E."/>
            <person name="Palmieri A."/>
            <person name="Raymond C."/>
            <person name="Rouse G."/>
            <person name="Saenphimmachak C."/>
            <person name="Wu Z."/>
            <person name="Romero P."/>
            <person name="Gordon D."/>
            <person name="Zhang S."/>
            <person name="Yoo H."/>
            <person name="Tao Y."/>
            <person name="Biddle P."/>
            <person name="Jung M."/>
            <person name="Krespan W."/>
            <person name="Perry M."/>
            <person name="Gordon-Kamm B."/>
            <person name="Liao L."/>
            <person name="Kim S."/>
            <person name="Hendrick C."/>
            <person name="Zhao Z.-Y."/>
            <person name="Dolan M."/>
            <person name="Chumley F."/>
            <person name="Tingey S.V."/>
            <person name="Tomb J.-F."/>
            <person name="Gordon M.P."/>
            <person name="Olson M.V."/>
            <person name="Nester E.W."/>
        </authorList>
    </citation>
    <scope>NUCLEOTIDE SEQUENCE [LARGE SCALE GENOMIC DNA]</scope>
    <source>
        <strain>C58 / ATCC 33970</strain>
    </source>
</reference>
<reference key="2">
    <citation type="journal article" date="2001" name="Science">
        <title>Genome sequence of the plant pathogen and biotechnology agent Agrobacterium tumefaciens C58.</title>
        <authorList>
            <person name="Goodner B."/>
            <person name="Hinkle G."/>
            <person name="Gattung S."/>
            <person name="Miller N."/>
            <person name="Blanchard M."/>
            <person name="Qurollo B."/>
            <person name="Goldman B.S."/>
            <person name="Cao Y."/>
            <person name="Askenazi M."/>
            <person name="Halling C."/>
            <person name="Mullin L."/>
            <person name="Houmiel K."/>
            <person name="Gordon J."/>
            <person name="Vaudin M."/>
            <person name="Iartchouk O."/>
            <person name="Epp A."/>
            <person name="Liu F."/>
            <person name="Wollam C."/>
            <person name="Allinger M."/>
            <person name="Doughty D."/>
            <person name="Scott C."/>
            <person name="Lappas C."/>
            <person name="Markelz B."/>
            <person name="Flanagan C."/>
            <person name="Crowell C."/>
            <person name="Gurson J."/>
            <person name="Lomo C."/>
            <person name="Sear C."/>
            <person name="Strub G."/>
            <person name="Cielo C."/>
            <person name="Slater S."/>
        </authorList>
    </citation>
    <scope>NUCLEOTIDE SEQUENCE [LARGE SCALE GENOMIC DNA]</scope>
    <source>
        <strain>C58 / ATCC 33970</strain>
    </source>
</reference>
<keyword id="KW-0378">Hydrolase</keyword>
<keyword id="KW-0408">Iron</keyword>
<keyword id="KW-0479">Metal-binding</keyword>
<keyword id="KW-0648">Protein biosynthesis</keyword>
<keyword id="KW-1185">Reference proteome</keyword>